<accession>Q5HFB9</accession>
<gene>
    <name evidence="1" type="primary">obg</name>
    <name type="ordered locus">SACOL1699</name>
</gene>
<name>OBG_STAAC</name>
<comment type="function">
    <text evidence="1">An essential GTPase which binds GTP, GDP and possibly (p)ppGpp with moderate affinity, with high nucleotide exchange rates and a fairly low GTP hydrolysis rate. Plays a role in control of the cell cycle, stress response, ribosome biogenesis and in those bacteria that undergo differentiation, in morphogenesis control.</text>
</comment>
<comment type="cofactor">
    <cofactor evidence="1">
        <name>Mg(2+)</name>
        <dbReference type="ChEBI" id="CHEBI:18420"/>
    </cofactor>
</comment>
<comment type="subunit">
    <text evidence="1">Monomer.</text>
</comment>
<comment type="subcellular location">
    <subcellularLocation>
        <location evidence="1">Cytoplasm</location>
    </subcellularLocation>
</comment>
<comment type="similarity">
    <text evidence="1">Belongs to the TRAFAC class OBG-HflX-like GTPase superfamily. OBG GTPase family.</text>
</comment>
<dbReference type="EC" id="3.6.5.-" evidence="1"/>
<dbReference type="EMBL" id="CP000046">
    <property type="protein sequence ID" value="AAW36805.1"/>
    <property type="molecule type" value="Genomic_DNA"/>
</dbReference>
<dbReference type="RefSeq" id="WP_000496102.1">
    <property type="nucleotide sequence ID" value="NC_002951.2"/>
</dbReference>
<dbReference type="SMR" id="Q5HFB9"/>
<dbReference type="KEGG" id="sac:SACOL1699"/>
<dbReference type="HOGENOM" id="CLU_011747_2_1_9"/>
<dbReference type="Proteomes" id="UP000000530">
    <property type="component" value="Chromosome"/>
</dbReference>
<dbReference type="GO" id="GO:0005737">
    <property type="term" value="C:cytoplasm"/>
    <property type="evidence" value="ECO:0007669"/>
    <property type="project" value="UniProtKB-SubCell"/>
</dbReference>
<dbReference type="GO" id="GO:0005525">
    <property type="term" value="F:GTP binding"/>
    <property type="evidence" value="ECO:0007669"/>
    <property type="project" value="UniProtKB-UniRule"/>
</dbReference>
<dbReference type="GO" id="GO:0003924">
    <property type="term" value="F:GTPase activity"/>
    <property type="evidence" value="ECO:0007669"/>
    <property type="project" value="UniProtKB-UniRule"/>
</dbReference>
<dbReference type="GO" id="GO:0000287">
    <property type="term" value="F:magnesium ion binding"/>
    <property type="evidence" value="ECO:0007669"/>
    <property type="project" value="InterPro"/>
</dbReference>
<dbReference type="GO" id="GO:0042254">
    <property type="term" value="P:ribosome biogenesis"/>
    <property type="evidence" value="ECO:0007669"/>
    <property type="project" value="UniProtKB-UniRule"/>
</dbReference>
<dbReference type="CDD" id="cd01898">
    <property type="entry name" value="Obg"/>
    <property type="match status" value="1"/>
</dbReference>
<dbReference type="FunFam" id="2.70.210.12:FF:000001">
    <property type="entry name" value="GTPase Obg"/>
    <property type="match status" value="1"/>
</dbReference>
<dbReference type="FunFam" id="3.40.50.300:FF:000515">
    <property type="entry name" value="GTPase Obg"/>
    <property type="match status" value="1"/>
</dbReference>
<dbReference type="Gene3D" id="3.30.300.350">
    <property type="entry name" value="GTP-binding protein OBG, C-terminal domain"/>
    <property type="match status" value="1"/>
</dbReference>
<dbReference type="Gene3D" id="2.70.210.12">
    <property type="entry name" value="GTP1/OBG domain"/>
    <property type="match status" value="1"/>
</dbReference>
<dbReference type="Gene3D" id="3.40.50.300">
    <property type="entry name" value="P-loop containing nucleotide triphosphate hydrolases"/>
    <property type="match status" value="1"/>
</dbReference>
<dbReference type="HAMAP" id="MF_01454">
    <property type="entry name" value="GTPase_Obg"/>
    <property type="match status" value="1"/>
</dbReference>
<dbReference type="InterPro" id="IPR031167">
    <property type="entry name" value="G_OBG"/>
</dbReference>
<dbReference type="InterPro" id="IPR006073">
    <property type="entry name" value="GTP-bd"/>
</dbReference>
<dbReference type="InterPro" id="IPR014100">
    <property type="entry name" value="GTP-bd_Obg/CgtA"/>
</dbReference>
<dbReference type="InterPro" id="IPR036346">
    <property type="entry name" value="GTP-bd_prot_GTP1/OBG_C_sf"/>
</dbReference>
<dbReference type="InterPro" id="IPR006074">
    <property type="entry name" value="GTP1-OBG_CS"/>
</dbReference>
<dbReference type="InterPro" id="IPR006169">
    <property type="entry name" value="GTP1_OBG_dom"/>
</dbReference>
<dbReference type="InterPro" id="IPR036726">
    <property type="entry name" value="GTP1_OBG_dom_sf"/>
</dbReference>
<dbReference type="InterPro" id="IPR045086">
    <property type="entry name" value="OBG_GTPase"/>
</dbReference>
<dbReference type="InterPro" id="IPR015349">
    <property type="entry name" value="OCT_dom"/>
</dbReference>
<dbReference type="InterPro" id="IPR027417">
    <property type="entry name" value="P-loop_NTPase"/>
</dbReference>
<dbReference type="NCBIfam" id="TIGR02729">
    <property type="entry name" value="Obg_CgtA"/>
    <property type="match status" value="1"/>
</dbReference>
<dbReference type="NCBIfam" id="TIGR03595">
    <property type="entry name" value="Obg_CgtA_exten"/>
    <property type="match status" value="1"/>
</dbReference>
<dbReference type="NCBIfam" id="NF008954">
    <property type="entry name" value="PRK12296.1"/>
    <property type="match status" value="1"/>
</dbReference>
<dbReference type="NCBIfam" id="NF008955">
    <property type="entry name" value="PRK12297.1"/>
    <property type="match status" value="1"/>
</dbReference>
<dbReference type="NCBIfam" id="NF008956">
    <property type="entry name" value="PRK12299.1"/>
    <property type="match status" value="1"/>
</dbReference>
<dbReference type="PANTHER" id="PTHR11702">
    <property type="entry name" value="DEVELOPMENTALLY REGULATED GTP-BINDING PROTEIN-RELATED"/>
    <property type="match status" value="1"/>
</dbReference>
<dbReference type="PANTHER" id="PTHR11702:SF31">
    <property type="entry name" value="MITOCHONDRIAL RIBOSOME-ASSOCIATED GTPASE 2"/>
    <property type="match status" value="1"/>
</dbReference>
<dbReference type="Pfam" id="PF09269">
    <property type="entry name" value="DUF1967"/>
    <property type="match status" value="1"/>
</dbReference>
<dbReference type="Pfam" id="PF01018">
    <property type="entry name" value="GTP1_OBG"/>
    <property type="match status" value="1"/>
</dbReference>
<dbReference type="Pfam" id="PF01926">
    <property type="entry name" value="MMR_HSR1"/>
    <property type="match status" value="1"/>
</dbReference>
<dbReference type="PIRSF" id="PIRSF002401">
    <property type="entry name" value="GTP_bd_Obg/CgtA"/>
    <property type="match status" value="1"/>
</dbReference>
<dbReference type="PRINTS" id="PR00326">
    <property type="entry name" value="GTP1OBG"/>
</dbReference>
<dbReference type="SUPFAM" id="SSF102741">
    <property type="entry name" value="Obg GTP-binding protein C-terminal domain"/>
    <property type="match status" value="1"/>
</dbReference>
<dbReference type="SUPFAM" id="SSF82051">
    <property type="entry name" value="Obg GTP-binding protein N-terminal domain"/>
    <property type="match status" value="1"/>
</dbReference>
<dbReference type="SUPFAM" id="SSF52540">
    <property type="entry name" value="P-loop containing nucleoside triphosphate hydrolases"/>
    <property type="match status" value="1"/>
</dbReference>
<dbReference type="PROSITE" id="PS51710">
    <property type="entry name" value="G_OBG"/>
    <property type="match status" value="1"/>
</dbReference>
<dbReference type="PROSITE" id="PS00905">
    <property type="entry name" value="GTP1_OBG"/>
    <property type="match status" value="1"/>
</dbReference>
<dbReference type="PROSITE" id="PS51883">
    <property type="entry name" value="OBG"/>
    <property type="match status" value="1"/>
</dbReference>
<dbReference type="PROSITE" id="PS51881">
    <property type="entry name" value="OCT"/>
    <property type="match status" value="1"/>
</dbReference>
<sequence>MFVDQVKISLKAGDGGNGITAYRREKYVPFGGPAGGDGGKGASVVFEVDEGLRTLLDFRYQRHFKASKGENGQSSNMHGKNAEDLVLKVPPGTIIKNVETDEVLADLVEDGQRAVVAKGGRGGRGNSRFATPRNPAPDFSEKGEPGEELDVSLELKLLADVGLVGFPSVGKSTLLSIVSKAKPKIGAYHFTTIKPNLGVVSTPDQRSFVMADLPGLIEGASDGVGLGHQFLRHVERTKVIVHMIDMSGSEGREPIEDYKVINQELAAYEQRLEDRPQIVVANKMDLPESQDNLNLFKEEIGEDVPVIPVSTITRDNIDQLLYAIADKLEEYKDVDITVEEEESVGINRVLYKHTPSQDKFTISRDDDGAYVVSGNAIERMFKMTDFNSDPAVRRFARQMRSMGIDDALRERGCKNGDIVRILGGEFEFVE</sequence>
<evidence type="ECO:0000255" key="1">
    <source>
        <dbReference type="HAMAP-Rule" id="MF_01454"/>
    </source>
</evidence>
<evidence type="ECO:0000255" key="2">
    <source>
        <dbReference type="PROSITE-ProRule" id="PRU01229"/>
    </source>
</evidence>
<evidence type="ECO:0000255" key="3">
    <source>
        <dbReference type="PROSITE-ProRule" id="PRU01231"/>
    </source>
</evidence>
<evidence type="ECO:0000256" key="4">
    <source>
        <dbReference type="SAM" id="MobiDB-lite"/>
    </source>
</evidence>
<proteinExistence type="inferred from homology"/>
<feature type="chain" id="PRO_0000386269" description="GTPase Obg">
    <location>
        <begin position="1"/>
        <end position="430"/>
    </location>
</feature>
<feature type="domain" description="Obg" evidence="3">
    <location>
        <begin position="1"/>
        <end position="158"/>
    </location>
</feature>
<feature type="domain" description="OBG-type G" evidence="1">
    <location>
        <begin position="159"/>
        <end position="329"/>
    </location>
</feature>
<feature type="domain" description="OCT" evidence="2">
    <location>
        <begin position="352"/>
        <end position="430"/>
    </location>
</feature>
<feature type="region of interest" description="Disordered" evidence="4">
    <location>
        <begin position="118"/>
        <end position="145"/>
    </location>
</feature>
<feature type="binding site" evidence="1">
    <location>
        <begin position="165"/>
        <end position="172"/>
    </location>
    <ligand>
        <name>GTP</name>
        <dbReference type="ChEBI" id="CHEBI:37565"/>
    </ligand>
</feature>
<feature type="binding site" evidence="1">
    <location>
        <position position="172"/>
    </location>
    <ligand>
        <name>Mg(2+)</name>
        <dbReference type="ChEBI" id="CHEBI:18420"/>
    </ligand>
</feature>
<feature type="binding site" evidence="1">
    <location>
        <begin position="190"/>
        <end position="194"/>
    </location>
    <ligand>
        <name>GTP</name>
        <dbReference type="ChEBI" id="CHEBI:37565"/>
    </ligand>
</feature>
<feature type="binding site" evidence="1">
    <location>
        <position position="192"/>
    </location>
    <ligand>
        <name>Mg(2+)</name>
        <dbReference type="ChEBI" id="CHEBI:18420"/>
    </ligand>
</feature>
<feature type="binding site" evidence="1">
    <location>
        <begin position="212"/>
        <end position="215"/>
    </location>
    <ligand>
        <name>GTP</name>
        <dbReference type="ChEBI" id="CHEBI:37565"/>
    </ligand>
</feature>
<feature type="binding site" evidence="1">
    <location>
        <begin position="282"/>
        <end position="285"/>
    </location>
    <ligand>
        <name>GTP</name>
        <dbReference type="ChEBI" id="CHEBI:37565"/>
    </ligand>
</feature>
<feature type="binding site" evidence="1">
    <location>
        <begin position="310"/>
        <end position="312"/>
    </location>
    <ligand>
        <name>GTP</name>
        <dbReference type="ChEBI" id="CHEBI:37565"/>
    </ligand>
</feature>
<reference key="1">
    <citation type="journal article" date="2005" name="J. Bacteriol.">
        <title>Insights on evolution of virulence and resistance from the complete genome analysis of an early methicillin-resistant Staphylococcus aureus strain and a biofilm-producing methicillin-resistant Staphylococcus epidermidis strain.</title>
        <authorList>
            <person name="Gill S.R."/>
            <person name="Fouts D.E."/>
            <person name="Archer G.L."/>
            <person name="Mongodin E.F."/>
            <person name="DeBoy R.T."/>
            <person name="Ravel J."/>
            <person name="Paulsen I.T."/>
            <person name="Kolonay J.F."/>
            <person name="Brinkac L.M."/>
            <person name="Beanan M.J."/>
            <person name="Dodson R.J."/>
            <person name="Daugherty S.C."/>
            <person name="Madupu R."/>
            <person name="Angiuoli S.V."/>
            <person name="Durkin A.S."/>
            <person name="Haft D.H."/>
            <person name="Vamathevan J.J."/>
            <person name="Khouri H."/>
            <person name="Utterback T.R."/>
            <person name="Lee C."/>
            <person name="Dimitrov G."/>
            <person name="Jiang L."/>
            <person name="Qin H."/>
            <person name="Weidman J."/>
            <person name="Tran K."/>
            <person name="Kang K.H."/>
            <person name="Hance I.R."/>
            <person name="Nelson K.E."/>
            <person name="Fraser C.M."/>
        </authorList>
    </citation>
    <scope>NUCLEOTIDE SEQUENCE [LARGE SCALE GENOMIC DNA]</scope>
    <source>
        <strain>COL</strain>
    </source>
</reference>
<keyword id="KW-0963">Cytoplasm</keyword>
<keyword id="KW-0342">GTP-binding</keyword>
<keyword id="KW-0378">Hydrolase</keyword>
<keyword id="KW-0460">Magnesium</keyword>
<keyword id="KW-0479">Metal-binding</keyword>
<keyword id="KW-0547">Nucleotide-binding</keyword>
<protein>
    <recommendedName>
        <fullName evidence="1">GTPase Obg</fullName>
        <ecNumber evidence="1">3.6.5.-</ecNumber>
    </recommendedName>
    <alternativeName>
        <fullName evidence="1">GTP-binding protein Obg</fullName>
    </alternativeName>
</protein>
<organism>
    <name type="scientific">Staphylococcus aureus (strain COL)</name>
    <dbReference type="NCBI Taxonomy" id="93062"/>
    <lineage>
        <taxon>Bacteria</taxon>
        <taxon>Bacillati</taxon>
        <taxon>Bacillota</taxon>
        <taxon>Bacilli</taxon>
        <taxon>Bacillales</taxon>
        <taxon>Staphylococcaceae</taxon>
        <taxon>Staphylococcus</taxon>
    </lineage>
</organism>